<organism>
    <name type="scientific">Ralstonia nicotianae (strain ATCC BAA-1114 / GMI1000)</name>
    <name type="common">Ralstonia solanacearum</name>
    <dbReference type="NCBI Taxonomy" id="267608"/>
    <lineage>
        <taxon>Bacteria</taxon>
        <taxon>Pseudomonadati</taxon>
        <taxon>Pseudomonadota</taxon>
        <taxon>Betaproteobacteria</taxon>
        <taxon>Burkholderiales</taxon>
        <taxon>Burkholderiaceae</taxon>
        <taxon>Ralstonia</taxon>
        <taxon>Ralstonia solanacearum species complex</taxon>
    </lineage>
</organism>
<reference key="1">
    <citation type="journal article" date="2002" name="Nature">
        <title>Genome sequence of the plant pathogen Ralstonia solanacearum.</title>
        <authorList>
            <person name="Salanoubat M."/>
            <person name="Genin S."/>
            <person name="Artiguenave F."/>
            <person name="Gouzy J."/>
            <person name="Mangenot S."/>
            <person name="Arlat M."/>
            <person name="Billault A."/>
            <person name="Brottier P."/>
            <person name="Camus J.-C."/>
            <person name="Cattolico L."/>
            <person name="Chandler M."/>
            <person name="Choisne N."/>
            <person name="Claudel-Renard C."/>
            <person name="Cunnac S."/>
            <person name="Demange N."/>
            <person name="Gaspin C."/>
            <person name="Lavie M."/>
            <person name="Moisan A."/>
            <person name="Robert C."/>
            <person name="Saurin W."/>
            <person name="Schiex T."/>
            <person name="Siguier P."/>
            <person name="Thebault P."/>
            <person name="Whalen M."/>
            <person name="Wincker P."/>
            <person name="Levy M."/>
            <person name="Weissenbach J."/>
            <person name="Boucher C.A."/>
        </authorList>
    </citation>
    <scope>NUCLEOTIDE SEQUENCE [LARGE SCALE GENOMIC DNA]</scope>
    <source>
        <strain>ATCC BAA-1114 / GMI1000</strain>
    </source>
</reference>
<dbReference type="EC" id="2.1.1.199" evidence="1"/>
<dbReference type="EMBL" id="AL646052">
    <property type="protein sequence ID" value="CAD16559.1"/>
    <property type="molecule type" value="Genomic_DNA"/>
</dbReference>
<dbReference type="RefSeq" id="WP_011002758.1">
    <property type="nucleotide sequence ID" value="NC_003295.1"/>
</dbReference>
<dbReference type="SMR" id="Q8XVH9"/>
<dbReference type="STRING" id="267608.RSc2852"/>
<dbReference type="EnsemblBacteria" id="CAD16559">
    <property type="protein sequence ID" value="CAD16559"/>
    <property type="gene ID" value="RSc2852"/>
</dbReference>
<dbReference type="KEGG" id="rso:RSc2852"/>
<dbReference type="eggNOG" id="COG0275">
    <property type="taxonomic scope" value="Bacteria"/>
</dbReference>
<dbReference type="HOGENOM" id="CLU_038422_2_0_4"/>
<dbReference type="Proteomes" id="UP000001436">
    <property type="component" value="Chromosome"/>
</dbReference>
<dbReference type="GO" id="GO:0005737">
    <property type="term" value="C:cytoplasm"/>
    <property type="evidence" value="ECO:0007669"/>
    <property type="project" value="UniProtKB-SubCell"/>
</dbReference>
<dbReference type="GO" id="GO:0071424">
    <property type="term" value="F:rRNA (cytosine-N4-)-methyltransferase activity"/>
    <property type="evidence" value="ECO:0007669"/>
    <property type="project" value="UniProtKB-UniRule"/>
</dbReference>
<dbReference type="GO" id="GO:0070475">
    <property type="term" value="P:rRNA base methylation"/>
    <property type="evidence" value="ECO:0007669"/>
    <property type="project" value="UniProtKB-UniRule"/>
</dbReference>
<dbReference type="FunFam" id="1.10.150.170:FF:000001">
    <property type="entry name" value="Ribosomal RNA small subunit methyltransferase H"/>
    <property type="match status" value="1"/>
</dbReference>
<dbReference type="Gene3D" id="1.10.150.170">
    <property type="entry name" value="Putative methyltransferase TM0872, insert domain"/>
    <property type="match status" value="1"/>
</dbReference>
<dbReference type="Gene3D" id="3.40.50.150">
    <property type="entry name" value="Vaccinia Virus protein VP39"/>
    <property type="match status" value="1"/>
</dbReference>
<dbReference type="HAMAP" id="MF_01007">
    <property type="entry name" value="16SrRNA_methyltr_H"/>
    <property type="match status" value="1"/>
</dbReference>
<dbReference type="InterPro" id="IPR002903">
    <property type="entry name" value="RsmH"/>
</dbReference>
<dbReference type="InterPro" id="IPR023397">
    <property type="entry name" value="SAM-dep_MeTrfase_MraW_recog"/>
</dbReference>
<dbReference type="InterPro" id="IPR029063">
    <property type="entry name" value="SAM-dependent_MTases_sf"/>
</dbReference>
<dbReference type="NCBIfam" id="TIGR00006">
    <property type="entry name" value="16S rRNA (cytosine(1402)-N(4))-methyltransferase RsmH"/>
    <property type="match status" value="1"/>
</dbReference>
<dbReference type="PANTHER" id="PTHR11265:SF0">
    <property type="entry name" value="12S RRNA N4-METHYLCYTIDINE METHYLTRANSFERASE"/>
    <property type="match status" value="1"/>
</dbReference>
<dbReference type="PANTHER" id="PTHR11265">
    <property type="entry name" value="S-ADENOSYL-METHYLTRANSFERASE MRAW"/>
    <property type="match status" value="1"/>
</dbReference>
<dbReference type="Pfam" id="PF01795">
    <property type="entry name" value="Methyltransf_5"/>
    <property type="match status" value="1"/>
</dbReference>
<dbReference type="PIRSF" id="PIRSF004486">
    <property type="entry name" value="MraW"/>
    <property type="match status" value="1"/>
</dbReference>
<dbReference type="SUPFAM" id="SSF81799">
    <property type="entry name" value="Putative methyltransferase TM0872, insert domain"/>
    <property type="match status" value="1"/>
</dbReference>
<dbReference type="SUPFAM" id="SSF53335">
    <property type="entry name" value="S-adenosyl-L-methionine-dependent methyltransferases"/>
    <property type="match status" value="1"/>
</dbReference>
<proteinExistence type="inferred from homology"/>
<comment type="function">
    <text evidence="1">Specifically methylates the N4 position of cytidine in position 1402 (C1402) of 16S rRNA.</text>
</comment>
<comment type="catalytic activity">
    <reaction evidence="1">
        <text>cytidine(1402) in 16S rRNA + S-adenosyl-L-methionine = N(4)-methylcytidine(1402) in 16S rRNA + S-adenosyl-L-homocysteine + H(+)</text>
        <dbReference type="Rhea" id="RHEA:42928"/>
        <dbReference type="Rhea" id="RHEA-COMP:10286"/>
        <dbReference type="Rhea" id="RHEA-COMP:10287"/>
        <dbReference type="ChEBI" id="CHEBI:15378"/>
        <dbReference type="ChEBI" id="CHEBI:57856"/>
        <dbReference type="ChEBI" id="CHEBI:59789"/>
        <dbReference type="ChEBI" id="CHEBI:74506"/>
        <dbReference type="ChEBI" id="CHEBI:82748"/>
        <dbReference type="EC" id="2.1.1.199"/>
    </reaction>
</comment>
<comment type="subcellular location">
    <subcellularLocation>
        <location evidence="1">Cytoplasm</location>
    </subcellularLocation>
</comment>
<comment type="similarity">
    <text evidence="1">Belongs to the methyltransferase superfamily. RsmH family.</text>
</comment>
<gene>
    <name evidence="1" type="primary">rsmH</name>
    <name type="synonym">mraW</name>
    <name type="ordered locus">RSc2852</name>
    <name type="ORF">RS00253</name>
</gene>
<protein>
    <recommendedName>
        <fullName evidence="1">Ribosomal RNA small subunit methyltransferase H</fullName>
        <ecNumber evidence="1">2.1.1.199</ecNumber>
    </recommendedName>
    <alternativeName>
        <fullName evidence="1">16S rRNA m(4)C1402 methyltransferase</fullName>
    </alternativeName>
    <alternativeName>
        <fullName evidence="1">rRNA (cytosine-N(4)-)-methyltransferase RsmH</fullName>
    </alternativeName>
</protein>
<evidence type="ECO:0000255" key="1">
    <source>
        <dbReference type="HAMAP-Rule" id="MF_01007"/>
    </source>
</evidence>
<keyword id="KW-0963">Cytoplasm</keyword>
<keyword id="KW-0489">Methyltransferase</keyword>
<keyword id="KW-1185">Reference proteome</keyword>
<keyword id="KW-0698">rRNA processing</keyword>
<keyword id="KW-0949">S-adenosyl-L-methionine</keyword>
<keyword id="KW-0808">Transferase</keyword>
<sequence>MTTQASTGLRHQTVLRDEAIDALLWRDDGIYIDGTFGRGGHSRLILERLGPGGRLIAFDKDPAAITEAGTVEDARFAIEHDSFAHLDAALDARGIGRVAGVLLDLGISSPQIDEGARGFSFRMDGPLDMRMDTTRGITAAQWLAEADERDIARVIRDYGEERFAVQIAKAIVARRRESGTRGPLDRTSELAALVAQAVKTREKGQDPATRTFQALRIHVNQELADLETGLKSAFERLEQGGRLVVISFHSLEDRIVKRFMQALARPEQSAAPEMRRAPLRAHELPAPQLRLLGRVRPSEAEVSANPRSRSAIMRVAERC</sequence>
<accession>Q8XVH9</accession>
<feature type="chain" id="PRO_0000108688" description="Ribosomal RNA small subunit methyltransferase H">
    <location>
        <begin position="1"/>
        <end position="319"/>
    </location>
</feature>
<feature type="binding site" evidence="1">
    <location>
        <begin position="39"/>
        <end position="41"/>
    </location>
    <ligand>
        <name>S-adenosyl-L-methionine</name>
        <dbReference type="ChEBI" id="CHEBI:59789"/>
    </ligand>
</feature>
<feature type="binding site" evidence="1">
    <location>
        <position position="59"/>
    </location>
    <ligand>
        <name>S-adenosyl-L-methionine</name>
        <dbReference type="ChEBI" id="CHEBI:59789"/>
    </ligand>
</feature>
<feature type="binding site" evidence="1">
    <location>
        <position position="83"/>
    </location>
    <ligand>
        <name>S-adenosyl-L-methionine</name>
        <dbReference type="ChEBI" id="CHEBI:59789"/>
    </ligand>
</feature>
<feature type="binding site" evidence="1">
    <location>
        <position position="104"/>
    </location>
    <ligand>
        <name>S-adenosyl-L-methionine</name>
        <dbReference type="ChEBI" id="CHEBI:59789"/>
    </ligand>
</feature>
<feature type="binding site" evidence="1">
    <location>
        <position position="111"/>
    </location>
    <ligand>
        <name>S-adenosyl-L-methionine</name>
        <dbReference type="ChEBI" id="CHEBI:59789"/>
    </ligand>
</feature>
<name>RSMH_RALN1</name>